<proteinExistence type="inferred from homology"/>
<accession>Q34376</accession>
<protein>
    <recommendedName>
        <fullName>Cytochrome b</fullName>
    </recommendedName>
    <alternativeName>
        <fullName>Complex III subunit 3</fullName>
    </alternativeName>
    <alternativeName>
        <fullName>Complex III subunit III</fullName>
    </alternativeName>
    <alternativeName>
        <fullName>Cytochrome b-c1 complex subunit 3</fullName>
    </alternativeName>
    <alternativeName>
        <fullName>Ubiquinol-cytochrome-c reductase complex cytochrome b subunit</fullName>
    </alternativeName>
</protein>
<organism>
    <name type="scientific">Dasykaluta rosamondae</name>
    <name type="common">Little red marsupial mouse</name>
    <name type="synonym">Antechinus rosamondae</name>
    <dbReference type="NCBI Taxonomy" id="33560"/>
    <lineage>
        <taxon>Eukaryota</taxon>
        <taxon>Metazoa</taxon>
        <taxon>Chordata</taxon>
        <taxon>Craniata</taxon>
        <taxon>Vertebrata</taxon>
        <taxon>Euteleostomi</taxon>
        <taxon>Mammalia</taxon>
        <taxon>Metatheria</taxon>
        <taxon>Dasyuromorphia</taxon>
        <taxon>Dasyuridae</taxon>
        <taxon>Dasykaluta</taxon>
    </lineage>
</organism>
<comment type="function">
    <text evidence="2">Component of the ubiquinol-cytochrome c reductase complex (complex III or cytochrome b-c1 complex) that is part of the mitochondrial respiratory chain. The b-c1 complex mediates electron transfer from ubiquinol to cytochrome c. Contributes to the generation of a proton gradient across the mitochondrial membrane that is then used for ATP synthesis.</text>
</comment>
<comment type="cofactor">
    <cofactor evidence="2">
        <name>heme b</name>
        <dbReference type="ChEBI" id="CHEBI:60344"/>
    </cofactor>
    <text evidence="2">Binds 2 heme b groups non-covalently.</text>
</comment>
<comment type="subunit">
    <text evidence="2">The cytochrome bc1 complex contains 11 subunits: 3 respiratory subunits (MT-CYB, CYC1 and UQCRFS1), 2 core proteins (UQCRC1 and UQCRC2) and 6 low-molecular weight proteins (UQCRH/QCR6, UQCRB/QCR7, UQCRQ/QCR8, UQCR10/QCR9, UQCR11/QCR10 and a cleavage product of UQCRFS1). This cytochrome bc1 complex then forms a dimer.</text>
</comment>
<comment type="subcellular location">
    <subcellularLocation>
        <location evidence="2">Mitochondrion inner membrane</location>
        <topology evidence="2">Multi-pass membrane protein</topology>
    </subcellularLocation>
</comment>
<comment type="miscellaneous">
    <text evidence="1">Heme 1 (or BL or b562) is low-potential and absorbs at about 562 nm, and heme 2 (or BH or b566) is high-potential and absorbs at about 566 nm.</text>
</comment>
<comment type="similarity">
    <text evidence="3 4">Belongs to the cytochrome b family.</text>
</comment>
<comment type="caution">
    <text evidence="2">The full-length protein contains only eight transmembrane helices, not nine as predicted by bioinformatics tools.</text>
</comment>
<reference key="1">
    <citation type="journal article" date="1992" name="Proc. R. Soc. B">
        <title>Phylogenetic relationships of the thylacine (Mammalia: Thylacinidae) among dasyuroid marsupials: evidence from cytochrome b DNA sequences.</title>
        <authorList>
            <person name="Krajewski C."/>
            <person name="Driskell A.C."/>
            <person name="Baverstock P.R."/>
            <person name="Braun M.J."/>
        </authorList>
    </citation>
    <scope>NUCLEOTIDE SEQUENCE [GENOMIC DNA]</scope>
</reference>
<name>CYB_DASRO</name>
<keyword id="KW-0249">Electron transport</keyword>
<keyword id="KW-0349">Heme</keyword>
<keyword id="KW-0408">Iron</keyword>
<keyword id="KW-0472">Membrane</keyword>
<keyword id="KW-0479">Metal-binding</keyword>
<keyword id="KW-0496">Mitochondrion</keyword>
<keyword id="KW-0999">Mitochondrion inner membrane</keyword>
<keyword id="KW-0679">Respiratory chain</keyword>
<keyword id="KW-0812">Transmembrane</keyword>
<keyword id="KW-1133">Transmembrane helix</keyword>
<keyword id="KW-0813">Transport</keyword>
<keyword id="KW-0830">Ubiquinone</keyword>
<feature type="chain" id="PRO_0000060869" description="Cytochrome b">
    <location>
        <begin position="1"/>
        <end position="381"/>
    </location>
</feature>
<feature type="transmembrane region" description="Helical" evidence="2">
    <location>
        <begin position="33"/>
        <end position="53"/>
    </location>
</feature>
<feature type="transmembrane region" description="Helical" evidence="2">
    <location>
        <begin position="77"/>
        <end position="98"/>
    </location>
</feature>
<feature type="transmembrane region" description="Helical" evidence="2">
    <location>
        <begin position="113"/>
        <end position="133"/>
    </location>
</feature>
<feature type="transmembrane region" description="Helical" evidence="2">
    <location>
        <begin position="178"/>
        <end position="198"/>
    </location>
</feature>
<feature type="transmembrane region" description="Helical" evidence="2">
    <location>
        <begin position="226"/>
        <end position="246"/>
    </location>
</feature>
<feature type="transmembrane region" description="Helical" evidence="2">
    <location>
        <begin position="288"/>
        <end position="308"/>
    </location>
</feature>
<feature type="transmembrane region" description="Helical" evidence="2">
    <location>
        <begin position="320"/>
        <end position="340"/>
    </location>
</feature>
<feature type="transmembrane region" description="Helical" evidence="2">
    <location>
        <begin position="347"/>
        <end position="367"/>
    </location>
</feature>
<feature type="binding site" description="axial binding residue" evidence="2">
    <location>
        <position position="83"/>
    </location>
    <ligand>
        <name>heme b</name>
        <dbReference type="ChEBI" id="CHEBI:60344"/>
        <label>b562</label>
    </ligand>
    <ligandPart>
        <name>Fe</name>
        <dbReference type="ChEBI" id="CHEBI:18248"/>
    </ligandPart>
</feature>
<feature type="binding site" description="axial binding residue" evidence="2">
    <location>
        <position position="97"/>
    </location>
    <ligand>
        <name>heme b</name>
        <dbReference type="ChEBI" id="CHEBI:60344"/>
        <label>b566</label>
    </ligand>
    <ligandPart>
        <name>Fe</name>
        <dbReference type="ChEBI" id="CHEBI:18248"/>
    </ligandPart>
</feature>
<feature type="binding site" description="axial binding residue" evidence="2">
    <location>
        <position position="182"/>
    </location>
    <ligand>
        <name>heme b</name>
        <dbReference type="ChEBI" id="CHEBI:60344"/>
        <label>b562</label>
    </ligand>
    <ligandPart>
        <name>Fe</name>
        <dbReference type="ChEBI" id="CHEBI:18248"/>
    </ligandPart>
</feature>
<feature type="binding site" description="axial binding residue" evidence="2">
    <location>
        <position position="196"/>
    </location>
    <ligand>
        <name>heme b</name>
        <dbReference type="ChEBI" id="CHEBI:60344"/>
        <label>b566</label>
    </ligand>
    <ligandPart>
        <name>Fe</name>
        <dbReference type="ChEBI" id="CHEBI:18248"/>
    </ligandPart>
</feature>
<feature type="binding site" evidence="2">
    <location>
        <position position="201"/>
    </location>
    <ligand>
        <name>a ubiquinone</name>
        <dbReference type="ChEBI" id="CHEBI:16389"/>
    </ligand>
</feature>
<dbReference type="EMBL" id="M99456">
    <property type="protein sequence ID" value="AAB40883.1"/>
    <property type="molecule type" value="Genomic_DNA"/>
</dbReference>
<dbReference type="SMR" id="Q34376"/>
<dbReference type="GO" id="GO:0005743">
    <property type="term" value="C:mitochondrial inner membrane"/>
    <property type="evidence" value="ECO:0007669"/>
    <property type="project" value="UniProtKB-SubCell"/>
</dbReference>
<dbReference type="GO" id="GO:0045275">
    <property type="term" value="C:respiratory chain complex III"/>
    <property type="evidence" value="ECO:0007669"/>
    <property type="project" value="InterPro"/>
</dbReference>
<dbReference type="GO" id="GO:0046872">
    <property type="term" value="F:metal ion binding"/>
    <property type="evidence" value="ECO:0007669"/>
    <property type="project" value="UniProtKB-KW"/>
</dbReference>
<dbReference type="GO" id="GO:0008121">
    <property type="term" value="F:ubiquinol-cytochrome-c reductase activity"/>
    <property type="evidence" value="ECO:0007669"/>
    <property type="project" value="InterPro"/>
</dbReference>
<dbReference type="GO" id="GO:0006122">
    <property type="term" value="P:mitochondrial electron transport, ubiquinol to cytochrome c"/>
    <property type="evidence" value="ECO:0007669"/>
    <property type="project" value="TreeGrafter"/>
</dbReference>
<dbReference type="CDD" id="cd00290">
    <property type="entry name" value="cytochrome_b_C"/>
    <property type="match status" value="1"/>
</dbReference>
<dbReference type="CDD" id="cd00284">
    <property type="entry name" value="Cytochrome_b_N"/>
    <property type="match status" value="1"/>
</dbReference>
<dbReference type="FunFam" id="1.20.810.10:FF:000002">
    <property type="entry name" value="Cytochrome b"/>
    <property type="match status" value="1"/>
</dbReference>
<dbReference type="Gene3D" id="1.20.810.10">
    <property type="entry name" value="Cytochrome Bc1 Complex, Chain C"/>
    <property type="match status" value="1"/>
</dbReference>
<dbReference type="InterPro" id="IPR005798">
    <property type="entry name" value="Cyt_b/b6_C"/>
</dbReference>
<dbReference type="InterPro" id="IPR036150">
    <property type="entry name" value="Cyt_b/b6_C_sf"/>
</dbReference>
<dbReference type="InterPro" id="IPR005797">
    <property type="entry name" value="Cyt_b/b6_N"/>
</dbReference>
<dbReference type="InterPro" id="IPR027387">
    <property type="entry name" value="Cytb/b6-like_sf"/>
</dbReference>
<dbReference type="InterPro" id="IPR030689">
    <property type="entry name" value="Cytochrome_b"/>
</dbReference>
<dbReference type="InterPro" id="IPR048260">
    <property type="entry name" value="Cytochrome_b_C_euk/bac"/>
</dbReference>
<dbReference type="InterPro" id="IPR048259">
    <property type="entry name" value="Cytochrome_b_N_euk/bac"/>
</dbReference>
<dbReference type="InterPro" id="IPR016174">
    <property type="entry name" value="Di-haem_cyt_TM"/>
</dbReference>
<dbReference type="PANTHER" id="PTHR19271">
    <property type="entry name" value="CYTOCHROME B"/>
    <property type="match status" value="1"/>
</dbReference>
<dbReference type="PANTHER" id="PTHR19271:SF16">
    <property type="entry name" value="CYTOCHROME B"/>
    <property type="match status" value="1"/>
</dbReference>
<dbReference type="Pfam" id="PF00032">
    <property type="entry name" value="Cytochrom_B_C"/>
    <property type="match status" value="1"/>
</dbReference>
<dbReference type="Pfam" id="PF00033">
    <property type="entry name" value="Cytochrome_B"/>
    <property type="match status" value="1"/>
</dbReference>
<dbReference type="PIRSF" id="PIRSF038885">
    <property type="entry name" value="COB"/>
    <property type="match status" value="1"/>
</dbReference>
<dbReference type="SUPFAM" id="SSF81648">
    <property type="entry name" value="a domain/subunit of cytochrome bc1 complex (Ubiquinol-cytochrome c reductase)"/>
    <property type="match status" value="1"/>
</dbReference>
<dbReference type="SUPFAM" id="SSF81342">
    <property type="entry name" value="Transmembrane di-heme cytochromes"/>
    <property type="match status" value="1"/>
</dbReference>
<dbReference type="PROSITE" id="PS51003">
    <property type="entry name" value="CYTB_CTER"/>
    <property type="match status" value="1"/>
</dbReference>
<dbReference type="PROSITE" id="PS51002">
    <property type="entry name" value="CYTB_NTER"/>
    <property type="match status" value="1"/>
</dbReference>
<gene>
    <name type="primary">MT-CYB</name>
    <name type="synonym">COB</name>
    <name type="synonym">CYTB</name>
    <name type="synonym">MTCYB</name>
</gene>
<sequence>MISLRKSHPLLKIINHAFIDLPAPSNISAWWNFGSLLGICLIIQILTGLFLAMHYTSDTLTAFSSVAHICRDVNYGWLLRNLHANGASMFFMCLFLHVGRGIYYGSYLYKETWNIGVILLLTVMATAFVGYVLPWGQMSFWGATVIMNLLSAIPYIGTTLAEWIWGGFAVDKATLTRFFAFHFILPFIIVAFAAVHLLFLHETGSNNPTGINPDSDKIPFHPYYTIKDALGLIFLILSLLLLGLFSPDLLGDPDNFSPANPLNTPPHIKPEWYFLFAYAILRSIPNKLGGVLALLASILILLIIPLLHTANQRSMMFRPIFQTLFWILTADLITLTWIGGQPVEQPFIIIGQLALMLYFLLILALMPLAGMFENYMLEPKW</sequence>
<geneLocation type="mitochondrion"/>
<evidence type="ECO:0000250" key="1"/>
<evidence type="ECO:0000250" key="2">
    <source>
        <dbReference type="UniProtKB" id="P00157"/>
    </source>
</evidence>
<evidence type="ECO:0000255" key="3">
    <source>
        <dbReference type="PROSITE-ProRule" id="PRU00967"/>
    </source>
</evidence>
<evidence type="ECO:0000255" key="4">
    <source>
        <dbReference type="PROSITE-ProRule" id="PRU00968"/>
    </source>
</evidence>